<protein>
    <recommendedName>
        <fullName>Protein pufQ</fullName>
    </recommendedName>
</protein>
<feature type="chain" id="PRO_0000097100" description="Protein pufQ">
    <location>
        <begin position="1"/>
        <end position="74"/>
    </location>
</feature>
<comment type="function">
    <text>Required for bacteriochlorophyll biosynthesis. Directly involved in the assembly of both the B875 and B800-850 pigment-protein complexes.</text>
</comment>
<comment type="similarity">
    <text evidence="1">Belongs to the PufQ family.</text>
</comment>
<evidence type="ECO:0000305" key="1"/>
<reference key="1">
    <citation type="journal article" date="1989" name="J. Bacteriol.">
        <title>Structural and functional analysis of transcriptional control of the Rhodobacter capsulatus puf operon.</title>
        <authorList>
            <person name="Adams C.W."/>
            <person name="Forrest M.E."/>
            <person name="Cohen S.N."/>
            <person name="Beatty J.T."/>
        </authorList>
    </citation>
    <scope>NUCLEOTIDE SEQUENCE [GENOMIC DNA]</scope>
    <source>
        <strain>ATCC 33303 / B10</strain>
    </source>
</reference>
<dbReference type="EMBL" id="M22752">
    <property type="protein sequence ID" value="AAA26168.1"/>
    <property type="molecule type" value="Genomic_DNA"/>
</dbReference>
<dbReference type="PIR" id="A32253">
    <property type="entry name" value="A32253"/>
</dbReference>
<dbReference type="RefSeq" id="WP_013066434.1">
    <property type="nucleotide sequence ID" value="NZ_VIBE01000010.1"/>
</dbReference>
<dbReference type="SMR" id="P0CZ12"/>
<dbReference type="OMA" id="RIITPMI"/>
<dbReference type="OrthoDB" id="7872505at2"/>
<dbReference type="GO" id="GO:0030494">
    <property type="term" value="P:bacteriochlorophyll biosynthetic process"/>
    <property type="evidence" value="ECO:0007669"/>
    <property type="project" value="UniProtKB-KW"/>
</dbReference>
<dbReference type="GO" id="GO:0015979">
    <property type="term" value="P:photosynthesis"/>
    <property type="evidence" value="ECO:0007669"/>
    <property type="project" value="UniProtKB-KW"/>
</dbReference>
<dbReference type="InterPro" id="IPR008800">
    <property type="entry name" value="PufQ_cyt-su"/>
</dbReference>
<dbReference type="Pfam" id="PF05398">
    <property type="entry name" value="PufQ"/>
    <property type="match status" value="1"/>
</dbReference>
<dbReference type="PIRSF" id="PIRSF005825">
    <property type="entry name" value="PufQ"/>
    <property type="match status" value="1"/>
</dbReference>
<gene>
    <name type="primary">pufQ</name>
</gene>
<proteinExistence type="inferred from homology"/>
<name>PUFQ_RHOCA</name>
<sequence length="74" mass="8555">MQSQRLRAHGVQHVDRVPRPEFALYFSLILIVAVPFALVGWVMALVRERRIPECGPFARAWREAGEITPEIFRP</sequence>
<keyword id="KW-0077">Bacteriochlorophyll biosynthesis</keyword>
<keyword id="KW-0149">Chlorophyll biosynthesis</keyword>
<keyword id="KW-0602">Photosynthesis</keyword>
<accession>P0CZ12</accession>
<accession>P14601</accession>
<organism>
    <name type="scientific">Rhodobacter capsulatus</name>
    <name type="common">Rhodopseudomonas capsulata</name>
    <dbReference type="NCBI Taxonomy" id="1061"/>
    <lineage>
        <taxon>Bacteria</taxon>
        <taxon>Pseudomonadati</taxon>
        <taxon>Pseudomonadota</taxon>
        <taxon>Alphaproteobacteria</taxon>
        <taxon>Rhodobacterales</taxon>
        <taxon>Rhodobacter group</taxon>
        <taxon>Rhodobacter</taxon>
    </lineage>
</organism>